<accession>Q8RX78</accession>
<accession>Q9XI18</accession>
<protein>
    <recommendedName>
        <fullName evidence="5">Ubinuclein-1</fullName>
        <shortName evidence="5">AtUBN1</shortName>
    </recommendedName>
    <alternativeName>
        <fullName evidence="5">Ubiquitously expressed nuclear protein 1</fullName>
    </alternativeName>
</protein>
<organism>
    <name type="scientific">Arabidopsis thaliana</name>
    <name type="common">Mouse-ear cress</name>
    <dbReference type="NCBI Taxonomy" id="3702"/>
    <lineage>
        <taxon>Eukaryota</taxon>
        <taxon>Viridiplantae</taxon>
        <taxon>Streptophyta</taxon>
        <taxon>Embryophyta</taxon>
        <taxon>Tracheophyta</taxon>
        <taxon>Spermatophyta</taxon>
        <taxon>Magnoliopsida</taxon>
        <taxon>eudicotyledons</taxon>
        <taxon>Gunneridae</taxon>
        <taxon>Pentapetalae</taxon>
        <taxon>rosids</taxon>
        <taxon>malvids</taxon>
        <taxon>Brassicales</taxon>
        <taxon>Brassicaceae</taxon>
        <taxon>Camelineae</taxon>
        <taxon>Arabidopsis</taxon>
    </lineage>
</organism>
<proteinExistence type="evidence at protein level"/>
<keyword id="KW-0156">Chromatin regulator</keyword>
<keyword id="KW-0539">Nucleus</keyword>
<keyword id="KW-1185">Reference proteome</keyword>
<name>UBN1_ARATH</name>
<evidence type="ECO:0000250" key="1">
    <source>
        <dbReference type="UniProtKB" id="Q9NPG3"/>
    </source>
</evidence>
<evidence type="ECO:0000256" key="2">
    <source>
        <dbReference type="SAM" id="MobiDB-lite"/>
    </source>
</evidence>
<evidence type="ECO:0000269" key="3">
    <source>
    </source>
</evidence>
<evidence type="ECO:0000269" key="4">
    <source>
    </source>
</evidence>
<evidence type="ECO:0000303" key="5">
    <source>
    </source>
</evidence>
<evidence type="ECO:0000305" key="6"/>
<evidence type="ECO:0000312" key="7">
    <source>
        <dbReference type="Araport" id="AT1G21610"/>
    </source>
</evidence>
<evidence type="ECO:0000312" key="8">
    <source>
        <dbReference type="EMBL" id="AAD41413.1"/>
    </source>
</evidence>
<evidence type="ECO:0000312" key="9">
    <source>
        <dbReference type="EMBL" id="AC015447"/>
    </source>
</evidence>
<gene>
    <name evidence="5" type="primary">UBN1</name>
    <name evidence="7" type="ordered locus">At1g21610</name>
    <name evidence="9" type="ORF">F24J8.24</name>
    <name evidence="8" type="ORF">F8K7.2</name>
</gene>
<dbReference type="EMBL" id="AC007727">
    <property type="protein sequence ID" value="AAD41413.1"/>
    <property type="status" value="ALT_SEQ"/>
    <property type="molecule type" value="Genomic_DNA"/>
</dbReference>
<dbReference type="EMBL" id="AC015447">
    <property type="status" value="NOT_ANNOTATED_CDS"/>
    <property type="molecule type" value="Genomic_DNA"/>
</dbReference>
<dbReference type="EMBL" id="CP002684">
    <property type="protein sequence ID" value="AEE30124.1"/>
    <property type="molecule type" value="Genomic_DNA"/>
</dbReference>
<dbReference type="EMBL" id="AY090255">
    <property type="protein sequence ID" value="AAL90916.1"/>
    <property type="molecule type" value="mRNA"/>
</dbReference>
<dbReference type="EMBL" id="AY125533">
    <property type="protein sequence ID" value="AAM78043.1"/>
    <property type="molecule type" value="mRNA"/>
</dbReference>
<dbReference type="PIR" id="A86349">
    <property type="entry name" value="A86349"/>
</dbReference>
<dbReference type="RefSeq" id="NP_173580.2">
    <property type="nucleotide sequence ID" value="NM_102010.5"/>
</dbReference>
<dbReference type="SMR" id="Q8RX78"/>
<dbReference type="FunCoup" id="Q8RX78">
    <property type="interactions" value="1108"/>
</dbReference>
<dbReference type="STRING" id="3702.Q8RX78"/>
<dbReference type="iPTMnet" id="Q8RX78"/>
<dbReference type="PaxDb" id="3702-AT1G21610.3"/>
<dbReference type="EnsemblPlants" id="AT1G21610.1">
    <property type="protein sequence ID" value="AT1G21610.1"/>
    <property type="gene ID" value="AT1G21610"/>
</dbReference>
<dbReference type="GeneID" id="838762"/>
<dbReference type="Gramene" id="AT1G21610.1">
    <property type="protein sequence ID" value="AT1G21610.1"/>
    <property type="gene ID" value="AT1G21610"/>
</dbReference>
<dbReference type="KEGG" id="ath:AT1G21610"/>
<dbReference type="Araport" id="AT1G21610"/>
<dbReference type="TAIR" id="AT1G21610">
    <property type="gene designation" value="UBN1"/>
</dbReference>
<dbReference type="eggNOG" id="ENOG502QRNW">
    <property type="taxonomic scope" value="Eukaryota"/>
</dbReference>
<dbReference type="InParanoid" id="Q8RX78"/>
<dbReference type="OMA" id="MDNHGIR"/>
<dbReference type="PhylomeDB" id="Q8RX78"/>
<dbReference type="PRO" id="PR:Q8RX78"/>
<dbReference type="Proteomes" id="UP000006548">
    <property type="component" value="Chromosome 1"/>
</dbReference>
<dbReference type="ExpressionAtlas" id="Q8RX78">
    <property type="expression patterns" value="baseline and differential"/>
</dbReference>
<dbReference type="GO" id="GO:0005730">
    <property type="term" value="C:nucleolus"/>
    <property type="evidence" value="ECO:0000314"/>
    <property type="project" value="UniProtKB"/>
</dbReference>
<dbReference type="GO" id="GO:0005634">
    <property type="term" value="C:nucleus"/>
    <property type="evidence" value="ECO:0000314"/>
    <property type="project" value="UniProtKB"/>
</dbReference>
<dbReference type="GO" id="GO:0030875">
    <property type="term" value="C:rDNA protrusion"/>
    <property type="evidence" value="ECO:0000314"/>
    <property type="project" value="UniProtKB"/>
</dbReference>
<dbReference type="GO" id="GO:0045814">
    <property type="term" value="P:negative regulation of gene expression, epigenetic"/>
    <property type="evidence" value="ECO:0000315"/>
    <property type="project" value="UniProtKB"/>
</dbReference>
<dbReference type="GO" id="GO:0034728">
    <property type="term" value="P:nucleosome organization"/>
    <property type="evidence" value="ECO:0000315"/>
    <property type="project" value="UniProtKB"/>
</dbReference>
<dbReference type="GO" id="GO:0009651">
    <property type="term" value="P:response to salt stress"/>
    <property type="evidence" value="ECO:0000315"/>
    <property type="project" value="UniProtKB"/>
</dbReference>
<dbReference type="InterPro" id="IPR014840">
    <property type="entry name" value="HRD"/>
</dbReference>
<dbReference type="PANTHER" id="PTHR21669">
    <property type="entry name" value="CAPZ-INTERACTING PROTEIN AND RELATED PROTEINS"/>
    <property type="match status" value="1"/>
</dbReference>
<dbReference type="PANTHER" id="PTHR21669:SF28">
    <property type="entry name" value="YEMANUCLEIN"/>
    <property type="match status" value="1"/>
</dbReference>
<dbReference type="Pfam" id="PF08729">
    <property type="entry name" value="HUN"/>
    <property type="match status" value="1"/>
</dbReference>
<feature type="chain" id="PRO_0000441876" description="Ubinuclein-1">
    <location>
        <begin position="1"/>
        <end position="684"/>
    </location>
</feature>
<feature type="region of interest" description="Disordered" evidence="2">
    <location>
        <begin position="108"/>
        <end position="137"/>
    </location>
</feature>
<feature type="region of interest" description="Disordered" evidence="2">
    <location>
        <begin position="157"/>
        <end position="287"/>
    </location>
</feature>
<feature type="region of interest" description="Disordered" evidence="2">
    <location>
        <begin position="311"/>
        <end position="332"/>
    </location>
</feature>
<feature type="region of interest" description="Disordered" evidence="2">
    <location>
        <begin position="609"/>
        <end position="631"/>
    </location>
</feature>
<feature type="region of interest" description="Disordered" evidence="2">
    <location>
        <begin position="660"/>
        <end position="684"/>
    </location>
</feature>
<feature type="compositionally biased region" description="Acidic residues" evidence="2">
    <location>
        <begin position="114"/>
        <end position="137"/>
    </location>
</feature>
<feature type="compositionally biased region" description="Basic and acidic residues" evidence="2">
    <location>
        <begin position="157"/>
        <end position="167"/>
    </location>
</feature>
<feature type="compositionally biased region" description="Basic and acidic residues" evidence="2">
    <location>
        <begin position="184"/>
        <end position="199"/>
    </location>
</feature>
<feature type="compositionally biased region" description="Polar residues" evidence="2">
    <location>
        <begin position="211"/>
        <end position="235"/>
    </location>
</feature>
<feature type="compositionally biased region" description="Basic and acidic residues" evidence="2">
    <location>
        <begin position="238"/>
        <end position="260"/>
    </location>
</feature>
<feature type="compositionally biased region" description="Polar residues" evidence="2">
    <location>
        <begin position="261"/>
        <end position="284"/>
    </location>
</feature>
<feature type="compositionally biased region" description="Polar residues" evidence="2">
    <location>
        <begin position="311"/>
        <end position="321"/>
    </location>
</feature>
<feature type="compositionally biased region" description="Polar residues" evidence="2">
    <location>
        <begin position="611"/>
        <end position="631"/>
    </location>
</feature>
<feature type="compositionally biased region" description="Polar residues" evidence="2">
    <location>
        <begin position="669"/>
        <end position="684"/>
    </location>
</feature>
<sequence length="684" mass="76330">MSEVNEMSGGSIGGELLRASPKVLTAGDRKLLKVELRPGDTTYVSWKKLMRDAGKVNGLSASVPDPPPNANPNLEFRIAPGHPVEIETNEQPHSNRFNAVIEKIERLYKGNDSSDGEELDGAPDDDEYDTEDSFIDDAELDEYFEVDNSTVKHDGFYVNRGKLERMEPSTTSNQQPKKRRRKDSAKPCRDAVDVSDKHTKLSITARKKDQSTAPGSWKTQESPLPSGAQDANTSVPLDDVKHSDRANHQSRNDTSHKSRETGSSSALHQKYSNKSLHQQSTSLLGKSPPNVFAEVTVVRQKENNGMHQLANVTGSRQSSQASKKDGSNVKSKTSILEKAIRELEKVVVESRPPAITENQEADTSSQAVKRRLPRDVKLKLAKVARIAQASQGKHSTELINRLMSIVGHLIQLRSLKRNLKIMIDMGDSATREKDTRFKQINNEVLDMIKAKVSLMESQAIKPEGATSDDFQDSVEKPSLKKFVMDAALEDKLCDLYDIFIDGLDEDQGPQTKKLYVNLAELWPNRLMDYRGIKHAIFRAKERRKALYGNLAKEMDQTKMKKSMKQLVPRTDCTAQPNTELVVQRQHSGEKKLIVDPNATSTSVVTSQTMVDRSNQQQPEKLKGISSSCNPTEETRVVKRKNEAVMAEKQVVLALKKPEHPQTRVIPAPQNLNIPRTTPDLNLPS</sequence>
<comment type="function">
    <text evidence="1">May be required for replication-independent chromatin assembly.</text>
</comment>
<comment type="subunit">
    <text evidence="3 4">Component of the HIRA complex made of UBN1, UBN2, ASF1A, CABIN1 and HIRA (PubMed:25086063, PubMed:25600486). Interacts with HIRA (PubMed:25086063).</text>
</comment>
<comment type="subcellular location">
    <subcellularLocation>
        <location evidence="3">Nucleus</location>
    </subcellularLocation>
    <subcellularLocation>
        <location evidence="3">Nucleus</location>
        <location evidence="3">Nucleolus</location>
    </subcellularLocation>
    <text evidence="3">Localized at rDNA loci in the nucleolus.</text>
</comment>
<comment type="disruption phenotype">
    <text evidence="3">No visible phenotype.</text>
</comment>
<comment type="similarity">
    <text evidence="6">Belongs to the ubinuclein family.</text>
</comment>
<comment type="sequence caution" evidence="6">
    <conflict type="erroneous gene model prediction">
        <sequence resource="EMBL-CDS" id="AAD41413"/>
    </conflict>
</comment>
<reference key="1">
    <citation type="journal article" date="2000" name="Nature">
        <title>Sequence and analysis of chromosome 1 of the plant Arabidopsis thaliana.</title>
        <authorList>
            <person name="Theologis A."/>
            <person name="Ecker J.R."/>
            <person name="Palm C.J."/>
            <person name="Federspiel N.A."/>
            <person name="Kaul S."/>
            <person name="White O."/>
            <person name="Alonso J."/>
            <person name="Altafi H."/>
            <person name="Araujo R."/>
            <person name="Bowman C.L."/>
            <person name="Brooks S.Y."/>
            <person name="Buehler E."/>
            <person name="Chan A."/>
            <person name="Chao Q."/>
            <person name="Chen H."/>
            <person name="Cheuk R.F."/>
            <person name="Chin C.W."/>
            <person name="Chung M.K."/>
            <person name="Conn L."/>
            <person name="Conway A.B."/>
            <person name="Conway A.R."/>
            <person name="Creasy T.H."/>
            <person name="Dewar K."/>
            <person name="Dunn P."/>
            <person name="Etgu P."/>
            <person name="Feldblyum T.V."/>
            <person name="Feng J.-D."/>
            <person name="Fong B."/>
            <person name="Fujii C.Y."/>
            <person name="Gill J.E."/>
            <person name="Goldsmith A.D."/>
            <person name="Haas B."/>
            <person name="Hansen N.F."/>
            <person name="Hughes B."/>
            <person name="Huizar L."/>
            <person name="Hunter J.L."/>
            <person name="Jenkins J."/>
            <person name="Johnson-Hopson C."/>
            <person name="Khan S."/>
            <person name="Khaykin E."/>
            <person name="Kim C.J."/>
            <person name="Koo H.L."/>
            <person name="Kremenetskaia I."/>
            <person name="Kurtz D.B."/>
            <person name="Kwan A."/>
            <person name="Lam B."/>
            <person name="Langin-Hooper S."/>
            <person name="Lee A."/>
            <person name="Lee J.M."/>
            <person name="Lenz C.A."/>
            <person name="Li J.H."/>
            <person name="Li Y.-P."/>
            <person name="Lin X."/>
            <person name="Liu S.X."/>
            <person name="Liu Z.A."/>
            <person name="Luros J.S."/>
            <person name="Maiti R."/>
            <person name="Marziali A."/>
            <person name="Militscher J."/>
            <person name="Miranda M."/>
            <person name="Nguyen M."/>
            <person name="Nierman W.C."/>
            <person name="Osborne B.I."/>
            <person name="Pai G."/>
            <person name="Peterson J."/>
            <person name="Pham P.K."/>
            <person name="Rizzo M."/>
            <person name="Rooney T."/>
            <person name="Rowley D."/>
            <person name="Sakano H."/>
            <person name="Salzberg S.L."/>
            <person name="Schwartz J.R."/>
            <person name="Shinn P."/>
            <person name="Southwick A.M."/>
            <person name="Sun H."/>
            <person name="Tallon L.J."/>
            <person name="Tambunga G."/>
            <person name="Toriumi M.J."/>
            <person name="Town C.D."/>
            <person name="Utterback T."/>
            <person name="Van Aken S."/>
            <person name="Vaysberg M."/>
            <person name="Vysotskaia V.S."/>
            <person name="Walker M."/>
            <person name="Wu D."/>
            <person name="Yu G."/>
            <person name="Fraser C.M."/>
            <person name="Venter J.C."/>
            <person name="Davis R.W."/>
        </authorList>
    </citation>
    <scope>NUCLEOTIDE SEQUENCE [LARGE SCALE GENOMIC DNA]</scope>
    <source>
        <strain>cv. Columbia</strain>
    </source>
</reference>
<reference key="2">
    <citation type="journal article" date="2017" name="Plant J.">
        <title>Araport11: a complete reannotation of the Arabidopsis thaliana reference genome.</title>
        <authorList>
            <person name="Cheng C.Y."/>
            <person name="Krishnakumar V."/>
            <person name="Chan A.P."/>
            <person name="Thibaud-Nissen F."/>
            <person name="Schobel S."/>
            <person name="Town C.D."/>
        </authorList>
    </citation>
    <scope>GENOME REANNOTATION</scope>
    <source>
        <strain>cv. Columbia</strain>
    </source>
</reference>
<reference key="3">
    <citation type="journal article" date="2003" name="Science">
        <title>Empirical analysis of transcriptional activity in the Arabidopsis genome.</title>
        <authorList>
            <person name="Yamada K."/>
            <person name="Lim J."/>
            <person name="Dale J.M."/>
            <person name="Chen H."/>
            <person name="Shinn P."/>
            <person name="Palm C.J."/>
            <person name="Southwick A.M."/>
            <person name="Wu H.C."/>
            <person name="Kim C.J."/>
            <person name="Nguyen M."/>
            <person name="Pham P.K."/>
            <person name="Cheuk R.F."/>
            <person name="Karlin-Newmann G."/>
            <person name="Liu S.X."/>
            <person name="Lam B."/>
            <person name="Sakano H."/>
            <person name="Wu T."/>
            <person name="Yu G."/>
            <person name="Miranda M."/>
            <person name="Quach H.L."/>
            <person name="Tripp M."/>
            <person name="Chang C.H."/>
            <person name="Lee J.M."/>
            <person name="Toriumi M.J."/>
            <person name="Chan M.M."/>
            <person name="Tang C.C."/>
            <person name="Onodera C.S."/>
            <person name="Deng J.M."/>
            <person name="Akiyama K."/>
            <person name="Ansari Y."/>
            <person name="Arakawa T."/>
            <person name="Banh J."/>
            <person name="Banno F."/>
            <person name="Bowser L."/>
            <person name="Brooks S.Y."/>
            <person name="Carninci P."/>
            <person name="Chao Q."/>
            <person name="Choy N."/>
            <person name="Enju A."/>
            <person name="Goldsmith A.D."/>
            <person name="Gurjal M."/>
            <person name="Hansen N.F."/>
            <person name="Hayashizaki Y."/>
            <person name="Johnson-Hopson C."/>
            <person name="Hsuan V.W."/>
            <person name="Iida K."/>
            <person name="Karnes M."/>
            <person name="Khan S."/>
            <person name="Koesema E."/>
            <person name="Ishida J."/>
            <person name="Jiang P.X."/>
            <person name="Jones T."/>
            <person name="Kawai J."/>
            <person name="Kamiya A."/>
            <person name="Meyers C."/>
            <person name="Nakajima M."/>
            <person name="Narusaka M."/>
            <person name="Seki M."/>
            <person name="Sakurai T."/>
            <person name="Satou M."/>
            <person name="Tamse R."/>
            <person name="Vaysberg M."/>
            <person name="Wallender E.K."/>
            <person name="Wong C."/>
            <person name="Yamamura Y."/>
            <person name="Yuan S."/>
            <person name="Shinozaki K."/>
            <person name="Davis R.W."/>
            <person name="Theologis A."/>
            <person name="Ecker J.R."/>
        </authorList>
    </citation>
    <scope>NUCLEOTIDE SEQUENCE [LARGE SCALE MRNA]</scope>
    <source>
        <strain>cv. Columbia</strain>
    </source>
</reference>
<reference key="4">
    <citation type="journal article" date="2014" name="Biol. Open">
        <title>The HIRA complex that deposits the histone H3.3 is conserved in Arabidopsis and facilitates transcriptional dynamics.</title>
        <authorList>
            <person name="Nie X."/>
            <person name="Wang H."/>
            <person name="Li J."/>
            <person name="Holec S."/>
            <person name="Berger F."/>
        </authorList>
    </citation>
    <scope>DISRUPTION PHENOTYPE</scope>
    <scope>SUBCELLULAR LOCATION</scope>
    <scope>SUBUNIT</scope>
    <scope>INTERACTION WITH HIRA</scope>
    <scope>GENE FAMILY</scope>
    <scope>NOMENCLATURE</scope>
    <source>
        <strain>cv. Columbia</strain>
    </source>
</reference>
<reference key="5">
    <citation type="journal article" date="2015" name="Plant J.">
        <title>The histone chaperone complex HIR maintains nucleosome occupancy and counterbalances impaired histone deposition in CAF-1 complex mutants.</title>
        <authorList>
            <person name="Duc C."/>
            <person name="Benoit M."/>
            <person name="Le Goff S."/>
            <person name="Simon L."/>
            <person name="Poulet A."/>
            <person name="Cotterell S."/>
            <person name="Tatout C."/>
            <person name="Probst A.V."/>
        </authorList>
    </citation>
    <scope>SUBUNIT</scope>
    <scope>GENE FAMILY</scope>
</reference>